<accession>B1YW20</accession>
<organism>
    <name type="scientific">Burkholderia ambifaria (strain MC40-6)</name>
    <dbReference type="NCBI Taxonomy" id="398577"/>
    <lineage>
        <taxon>Bacteria</taxon>
        <taxon>Pseudomonadati</taxon>
        <taxon>Pseudomonadota</taxon>
        <taxon>Betaproteobacteria</taxon>
        <taxon>Burkholderiales</taxon>
        <taxon>Burkholderiaceae</taxon>
        <taxon>Burkholderia</taxon>
        <taxon>Burkholderia cepacia complex</taxon>
    </lineage>
</organism>
<reference key="1">
    <citation type="submission" date="2008-04" db="EMBL/GenBank/DDBJ databases">
        <title>Complete sequence of chromosome 1 of Burkholderia ambifaria MC40-6.</title>
        <authorList>
            <person name="Copeland A."/>
            <person name="Lucas S."/>
            <person name="Lapidus A."/>
            <person name="Glavina del Rio T."/>
            <person name="Dalin E."/>
            <person name="Tice H."/>
            <person name="Pitluck S."/>
            <person name="Chain P."/>
            <person name="Malfatti S."/>
            <person name="Shin M."/>
            <person name="Vergez L."/>
            <person name="Lang D."/>
            <person name="Schmutz J."/>
            <person name="Larimer F."/>
            <person name="Land M."/>
            <person name="Hauser L."/>
            <person name="Kyrpides N."/>
            <person name="Lykidis A."/>
            <person name="Ramette A."/>
            <person name="Konstantinidis K."/>
            <person name="Tiedje J."/>
            <person name="Richardson P."/>
        </authorList>
    </citation>
    <scope>NUCLEOTIDE SEQUENCE [LARGE SCALE GENOMIC DNA]</scope>
    <source>
        <strain>MC40-6</strain>
    </source>
</reference>
<dbReference type="EC" id="3.5.3.23" evidence="1"/>
<dbReference type="EMBL" id="CP001025">
    <property type="protein sequence ID" value="ACB63556.1"/>
    <property type="molecule type" value="Genomic_DNA"/>
</dbReference>
<dbReference type="RefSeq" id="WP_012363448.1">
    <property type="nucleotide sequence ID" value="NC_010551.1"/>
</dbReference>
<dbReference type="SMR" id="B1YW20"/>
<dbReference type="KEGG" id="bac:BamMC406_1065"/>
<dbReference type="HOGENOM" id="CLU_053835_0_0_4"/>
<dbReference type="OrthoDB" id="248552at2"/>
<dbReference type="UniPathway" id="UPA00185">
    <property type="reaction ID" value="UER00280"/>
</dbReference>
<dbReference type="Proteomes" id="UP000001680">
    <property type="component" value="Chromosome 1"/>
</dbReference>
<dbReference type="GO" id="GO:0009015">
    <property type="term" value="F:N-succinylarginine dihydrolase activity"/>
    <property type="evidence" value="ECO:0007669"/>
    <property type="project" value="UniProtKB-UniRule"/>
</dbReference>
<dbReference type="GO" id="GO:0019544">
    <property type="term" value="P:arginine catabolic process to glutamate"/>
    <property type="evidence" value="ECO:0007669"/>
    <property type="project" value="UniProtKB-UniRule"/>
</dbReference>
<dbReference type="GO" id="GO:0019545">
    <property type="term" value="P:arginine catabolic process to succinate"/>
    <property type="evidence" value="ECO:0007669"/>
    <property type="project" value="UniProtKB-UniRule"/>
</dbReference>
<dbReference type="Gene3D" id="3.75.10.20">
    <property type="entry name" value="Succinylarginine dihydrolase"/>
    <property type="match status" value="1"/>
</dbReference>
<dbReference type="HAMAP" id="MF_01172">
    <property type="entry name" value="AstB"/>
    <property type="match status" value="1"/>
</dbReference>
<dbReference type="InterPro" id="IPR037031">
    <property type="entry name" value="AstB_sf"/>
</dbReference>
<dbReference type="InterPro" id="IPR007079">
    <property type="entry name" value="SuccinylArg_d-Hdrlase_AstB"/>
</dbReference>
<dbReference type="NCBIfam" id="TIGR03241">
    <property type="entry name" value="arg_catab_astB"/>
    <property type="match status" value="1"/>
</dbReference>
<dbReference type="NCBIfam" id="NF009789">
    <property type="entry name" value="PRK13281.1"/>
    <property type="match status" value="1"/>
</dbReference>
<dbReference type="PANTHER" id="PTHR30420">
    <property type="entry name" value="N-SUCCINYLARGININE DIHYDROLASE"/>
    <property type="match status" value="1"/>
</dbReference>
<dbReference type="PANTHER" id="PTHR30420:SF2">
    <property type="entry name" value="N-SUCCINYLARGININE DIHYDROLASE"/>
    <property type="match status" value="1"/>
</dbReference>
<dbReference type="Pfam" id="PF04996">
    <property type="entry name" value="AstB"/>
    <property type="match status" value="1"/>
</dbReference>
<dbReference type="SUPFAM" id="SSF55909">
    <property type="entry name" value="Pentein"/>
    <property type="match status" value="1"/>
</dbReference>
<feature type="chain" id="PRO_1000138003" description="N-succinylarginine dihydrolase">
    <location>
        <begin position="1"/>
        <end position="446"/>
    </location>
</feature>
<feature type="active site" evidence="1">
    <location>
        <position position="174"/>
    </location>
</feature>
<feature type="active site" evidence="1">
    <location>
        <position position="249"/>
    </location>
</feature>
<feature type="active site" description="Nucleophile" evidence="1">
    <location>
        <position position="370"/>
    </location>
</feature>
<feature type="binding site" evidence="1">
    <location>
        <begin position="19"/>
        <end position="28"/>
    </location>
    <ligand>
        <name>substrate</name>
    </ligand>
</feature>
<feature type="binding site" evidence="1">
    <location>
        <position position="110"/>
    </location>
    <ligand>
        <name>substrate</name>
    </ligand>
</feature>
<feature type="binding site" evidence="1">
    <location>
        <begin position="137"/>
        <end position="138"/>
    </location>
    <ligand>
        <name>substrate</name>
    </ligand>
</feature>
<feature type="binding site" evidence="1">
    <location>
        <position position="213"/>
    </location>
    <ligand>
        <name>substrate</name>
    </ligand>
</feature>
<feature type="binding site" evidence="1">
    <location>
        <position position="251"/>
    </location>
    <ligand>
        <name>substrate</name>
    </ligand>
</feature>
<feature type="binding site" evidence="1">
    <location>
        <position position="364"/>
    </location>
    <ligand>
        <name>substrate</name>
    </ligand>
</feature>
<evidence type="ECO:0000255" key="1">
    <source>
        <dbReference type="HAMAP-Rule" id="MF_01172"/>
    </source>
</evidence>
<comment type="function">
    <text evidence="1">Catalyzes the hydrolysis of N(2)-succinylarginine into N(2)-succinylornithine, ammonia and CO(2).</text>
</comment>
<comment type="catalytic activity">
    <reaction evidence="1">
        <text>N(2)-succinyl-L-arginine + 2 H2O + 2 H(+) = N(2)-succinyl-L-ornithine + 2 NH4(+) + CO2</text>
        <dbReference type="Rhea" id="RHEA:19533"/>
        <dbReference type="ChEBI" id="CHEBI:15377"/>
        <dbReference type="ChEBI" id="CHEBI:15378"/>
        <dbReference type="ChEBI" id="CHEBI:16526"/>
        <dbReference type="ChEBI" id="CHEBI:28938"/>
        <dbReference type="ChEBI" id="CHEBI:58241"/>
        <dbReference type="ChEBI" id="CHEBI:58514"/>
        <dbReference type="EC" id="3.5.3.23"/>
    </reaction>
</comment>
<comment type="pathway">
    <text evidence="1">Amino-acid degradation; L-arginine degradation via AST pathway; L-glutamate and succinate from L-arginine: step 2/5.</text>
</comment>
<comment type="subunit">
    <text evidence="1">Homodimer.</text>
</comment>
<comment type="similarity">
    <text evidence="1">Belongs to the succinylarginine dihydrolase family.</text>
</comment>
<protein>
    <recommendedName>
        <fullName evidence="1">N-succinylarginine dihydrolase</fullName>
        <ecNumber evidence="1">3.5.3.23</ecNumber>
    </recommendedName>
</protein>
<keyword id="KW-0056">Arginine metabolism</keyword>
<keyword id="KW-0378">Hydrolase</keyword>
<name>ASTB_BURA4</name>
<gene>
    <name evidence="1" type="primary">astB</name>
    <name type="ordered locus">BamMC406_1065</name>
</gene>
<proteinExistence type="inferred from homology"/>
<sequence>MNAQEANFDGLVGPTHNYAGLSFGNVASLNNEKSAANPKAAAKQGLRKMKQLADLGFAQGVLPPQERPSLRLLRELGFSGKDADVIAKAAKQAPELLAAASSASAMWTANAATVSPSADTGDGRVHFTPANLCSKLHRAIEHEATRRTLSTLFADPAHFAVHEALTGTPALGDEGAANHTRFCAEYGKPGVEFFVYGRAEYRRGPEPKRFPARQTFEASRAVAQRHGLDETATVYAQQDPDVIDAGVFHNDVISVGNRDTLFTHERAFVNKQAIYDTLTATLDARGARLNVIEVPEAAVSVNDAVTSYLFNSQLLSRADGSQVLVVPQECRENANVAAYLDELAAGNGPIRDVLVFDLRESMKNGGGPACLRLRVVLNDAERAAVTSNVWMNDTLFASLDAWIEKHYRDRLAPDDLADPTLLDESRTALDELTQILRVGSLYDFQR</sequence>